<protein>
    <recommendedName>
        <fullName evidence="7">Short chain dehydrogenase gsfE</fullName>
        <ecNumber evidence="5">1.-.-.-</ecNumber>
    </recommendedName>
    <alternativeName>
        <fullName evidence="7">Griseofulvin synthesis protein E</fullName>
    </alternativeName>
</protein>
<gene>
    <name evidence="7" type="primary">gsfE</name>
</gene>
<organism>
    <name type="scientific">Penicillium aethiopicum</name>
    <dbReference type="NCBI Taxonomy" id="36650"/>
    <lineage>
        <taxon>Eukaryota</taxon>
        <taxon>Fungi</taxon>
        <taxon>Dikarya</taxon>
        <taxon>Ascomycota</taxon>
        <taxon>Pezizomycotina</taxon>
        <taxon>Eurotiomycetes</taxon>
        <taxon>Eurotiomycetidae</taxon>
        <taxon>Eurotiales</taxon>
        <taxon>Aspergillaceae</taxon>
        <taxon>Penicillium</taxon>
    </lineage>
</organism>
<sequence length="377" mass="42538">MPKTAFITGANGLSGSAIVEYLCNTTTSDDWGSIIVTSRSPFKSTVMDPRIKFIALDFVNDVSSLVETMKEVCGAVTHAYFCSYLHKDDFAESYTVNKALFENFIAAIDKAAPKLENVTLQTGGKYYNLHVEPVPSPARENDPRRYGPFENFYFTQEDTLAEMQRGKTWSWNVIRPEAIIGANSQPYGLNVALTIAMYFLICRELGSASPMPTNQRYWEGTDDVSYAPLIADLTIFVSTRKSCANEAFNVTNGDYFTWRYMWPRLAASLGAKADSQQCFEKPMPGEGELQLDWSLAEWCKDKRKVWEDLCDRQGLPGAKATFDLAGWAVGDFLYQRTWSATLSVNKARRFGWTGHMDSYQSFVDTFDKFRQLGLIPK</sequence>
<reference key="1">
    <citation type="journal article" date="2010" name="Chem. Biol.">
        <title>Identification of the viridicatumtoxin and griseofulvin gene clusters from Penicillium aethiopicum.</title>
        <authorList>
            <person name="Chooi Y.H."/>
            <person name="Cacho R."/>
            <person name="Tang Y."/>
        </authorList>
    </citation>
    <scope>NUCLEOTIDE SEQUENCE [GENOMIC DNA]</scope>
    <scope>FUNCTION</scope>
    <source>
        <strain>IBT 5753</strain>
    </source>
</reference>
<reference key="2">
    <citation type="journal article" date="1958" name="Nature">
        <title>Experimental ringworm in guinea pigs: oral treatment with griseofulvin.</title>
        <authorList>
            <person name="Gentles J.C."/>
        </authorList>
    </citation>
    <scope>BIOTECHNOLOGY</scope>
</reference>
<reference key="3">
    <citation type="journal article" date="1973" name="Nature">
        <title>Griseofulvin inhibits fungal mitosis.</title>
        <authorList>
            <person name="Gull K."/>
            <person name="Trinci A.P."/>
        </authorList>
    </citation>
    <scope>BIOTECHNOLOGY</scope>
</reference>
<reference key="4">
    <citation type="journal article" date="2013" name="ACS Chem. Biol.">
        <title>Complexity generation in fungal polyketide biosynthesis: a spirocycle-forming P450 in the concise pathway to the antifungal drug griseofulvin.</title>
        <authorList>
            <person name="Cacho R.A."/>
            <person name="Chooi Y.H."/>
            <person name="Zhou H."/>
            <person name="Tang Y."/>
        </authorList>
    </citation>
    <scope>FUNCTION</scope>
    <scope>DISRUPTION PHENOTYPE</scope>
    <scope>CATALYTIC ACTIVITY</scope>
</reference>
<dbReference type="EC" id="1.-.-.-" evidence="5"/>
<dbReference type="EMBL" id="GU574478">
    <property type="protein sequence ID" value="ADI24957.1"/>
    <property type="molecule type" value="Genomic_DNA"/>
</dbReference>
<dbReference type="SMR" id="D7PI19"/>
<dbReference type="BioCyc" id="MetaCyc:MONOMER-19273"/>
<dbReference type="UniPathway" id="UPA00213"/>
<dbReference type="GO" id="GO:0000166">
    <property type="term" value="F:nucleotide binding"/>
    <property type="evidence" value="ECO:0007669"/>
    <property type="project" value="UniProtKB-KW"/>
</dbReference>
<dbReference type="GO" id="GO:0016491">
    <property type="term" value="F:oxidoreductase activity"/>
    <property type="evidence" value="ECO:0007669"/>
    <property type="project" value="UniProtKB-KW"/>
</dbReference>
<dbReference type="GO" id="GO:0140878">
    <property type="term" value="P:griseofulvin biosynthetic process"/>
    <property type="evidence" value="ECO:0000314"/>
    <property type="project" value="GO_Central"/>
</dbReference>
<dbReference type="GO" id="GO:0016114">
    <property type="term" value="P:terpenoid biosynthetic process"/>
    <property type="evidence" value="ECO:0007669"/>
    <property type="project" value="UniProtKB-UniPathway"/>
</dbReference>
<dbReference type="CDD" id="cd08948">
    <property type="entry name" value="5beta-POR_like_SDR_a"/>
    <property type="match status" value="1"/>
</dbReference>
<dbReference type="Gene3D" id="3.40.50.720">
    <property type="entry name" value="NAD(P)-binding Rossmann-like Domain"/>
    <property type="match status" value="1"/>
</dbReference>
<dbReference type="InterPro" id="IPR036291">
    <property type="entry name" value="NAD(P)-bd_dom_sf"/>
</dbReference>
<dbReference type="InterPro" id="IPR055222">
    <property type="entry name" value="PRISE-like_Rossmann-fold"/>
</dbReference>
<dbReference type="PANTHER" id="PTHR32487">
    <property type="entry name" value="3-OXO-DELTA(4,5)-STEROID 5-BETA-REDUCTASE"/>
    <property type="match status" value="1"/>
</dbReference>
<dbReference type="PANTHER" id="PTHR32487:SF0">
    <property type="entry name" value="3-OXO-DELTA(4,5)-STEROID 5-BETA-REDUCTASE"/>
    <property type="match status" value="1"/>
</dbReference>
<dbReference type="Pfam" id="PF22917">
    <property type="entry name" value="PRISE"/>
    <property type="match status" value="1"/>
</dbReference>
<dbReference type="SUPFAM" id="SSF51735">
    <property type="entry name" value="NAD(P)-binding Rossmann-fold domains"/>
    <property type="match status" value="1"/>
</dbReference>
<evidence type="ECO:0000250" key="1">
    <source>
        <dbReference type="UniProtKB" id="L0E2Z4"/>
    </source>
</evidence>
<evidence type="ECO:0000250" key="2">
    <source>
        <dbReference type="UniProtKB" id="O93868"/>
    </source>
</evidence>
<evidence type="ECO:0000269" key="3">
    <source>
    </source>
</evidence>
<evidence type="ECO:0000269" key="4">
    <source>
    </source>
</evidence>
<evidence type="ECO:0000269" key="5">
    <source>
    </source>
</evidence>
<evidence type="ECO:0000269" key="6">
    <source>
    </source>
</evidence>
<evidence type="ECO:0000303" key="7">
    <source>
    </source>
</evidence>
<evidence type="ECO:0000305" key="8"/>
<accession>D7PI19</accession>
<keyword id="KW-0521">NADP</keyword>
<keyword id="KW-0547">Nucleotide-binding</keyword>
<keyword id="KW-0560">Oxidoreductase</keyword>
<feature type="chain" id="PRO_0000436724" description="Short chain dehydrogenase gsfE">
    <location>
        <begin position="1"/>
        <end position="377"/>
    </location>
</feature>
<feature type="active site" description="Proton donor" evidence="2">
    <location>
        <position position="226"/>
    </location>
</feature>
<feature type="binding site" evidence="1">
    <location>
        <position position="89"/>
    </location>
    <ligand>
        <name>NADP(+)</name>
        <dbReference type="ChEBI" id="CHEBI:58349"/>
    </ligand>
</feature>
<feature type="binding site" evidence="2">
    <location>
        <position position="121"/>
    </location>
    <ligand>
        <name>NADP(+)</name>
        <dbReference type="ChEBI" id="CHEBI:58349"/>
    </ligand>
</feature>
<feature type="binding site" evidence="2">
    <location>
        <position position="226"/>
    </location>
    <ligand>
        <name>NADP(+)</name>
        <dbReference type="ChEBI" id="CHEBI:58349"/>
    </ligand>
</feature>
<feature type="binding site" evidence="2">
    <location>
        <position position="266"/>
    </location>
    <ligand>
        <name>NADP(+)</name>
        <dbReference type="ChEBI" id="CHEBI:58349"/>
    </ligand>
</feature>
<feature type="binding site" evidence="1">
    <location>
        <position position="268"/>
    </location>
    <ligand>
        <name>NADP(+)</name>
        <dbReference type="ChEBI" id="CHEBI:58349"/>
    </ligand>
</feature>
<proteinExistence type="evidence at protein level"/>
<comment type="function">
    <text evidence="4 5">Short chain dehydrogenase; part of the gene cluster that mediates the biosynthesis of griseofulvin, an important antifungal drug that has been in use for a long time for treating dermatophyte infections (PubMed:20534346, PubMed:23978092). The first step of the pathway is the formation of the heptaketide backbone by gsfA which is initiated by priming with acetyl-CoA, followed by sequential condensations of 6 malonyl-CoA units (PubMed:20534346, PubMed:23978092). The resulting benzophenone can undergo a spontaneous dehydration to form norlichexanthone (PubMed:23978092). However, the true precursor for the griseofulvin biosynthesis is not norlichexanthone, but the heptaketide benzophenone that is O-methylated at 3-OH by gsfB to produce griseophenone D which is further methylated at 9-OH by gsfC to yield griseophenone C (PubMed:23978092). Griseophenone C is then substrate of halogenase gsfI which is responsible for the regio-specific chlorination at the C13 position to form griseophenone B (PubMed:23978092). The cytochrome P450 gsfF catalyzes the coupling of orcinol and phloroglucinol rings in griseophenone B to form desmethyl-dehydrogriseofulvin A which is further methylated at 5-OH by gsfD to yield dehydrogriseofulvin (PubMed:23978092). Finally, gsfE performs stereospecific reduction of enone 18 of dehydrogriseofulvin to afford the final product griseofulvin (PubMed:23978092).</text>
</comment>
<comment type="catalytic activity">
    <reaction evidence="5">
        <text>dehydrogriseofulvin + NADPH + H(+) = griseofulvin + NADP(+)</text>
        <dbReference type="Rhea" id="RHEA:73943"/>
        <dbReference type="ChEBI" id="CHEBI:15378"/>
        <dbReference type="ChEBI" id="CHEBI:27779"/>
        <dbReference type="ChEBI" id="CHEBI:57783"/>
        <dbReference type="ChEBI" id="CHEBI:58349"/>
        <dbReference type="ChEBI" id="CHEBI:81999"/>
    </reaction>
    <physiologicalReaction direction="left-to-right" evidence="5">
        <dbReference type="Rhea" id="RHEA:73944"/>
    </physiologicalReaction>
</comment>
<comment type="pathway">
    <text evidence="4 5">Secondary metabolite biosynthesis; terpenoid biosynthesis.</text>
</comment>
<comment type="disruption phenotype">
    <text evidence="5">Impairs the production of griseofulvin, but accumulates the intermediates dehydrogriseofulvin and dechloro-dehydrogriseofulvi (PubMed:23978092).</text>
</comment>
<comment type="biotechnology">
    <text evidence="3 6">Griseofulvin is a spirocyclic fungal natural product used in treatment of fungal dermatophytes (PubMed:13577889, PubMed:4583105).</text>
</comment>
<comment type="similarity">
    <text evidence="8">Belongs to the short-chain dehydrogenases/reductases (SDR) family. Highly divergent.</text>
</comment>
<name>GSFE_PENAE</name>